<comment type="function">
    <text evidence="1">Transfers and isomerizes the ribose moiety from AdoMet to the 7-aminomethyl group of 7-deazaguanine (preQ1-tRNA) to give epoxyqueuosine (oQ-tRNA).</text>
</comment>
<comment type="catalytic activity">
    <reaction evidence="1">
        <text>7-aminomethyl-7-carbaguanosine(34) in tRNA + S-adenosyl-L-methionine = epoxyqueuosine(34) in tRNA + adenine + L-methionine + 2 H(+)</text>
        <dbReference type="Rhea" id="RHEA:32155"/>
        <dbReference type="Rhea" id="RHEA-COMP:10342"/>
        <dbReference type="Rhea" id="RHEA-COMP:18582"/>
        <dbReference type="ChEBI" id="CHEBI:15378"/>
        <dbReference type="ChEBI" id="CHEBI:16708"/>
        <dbReference type="ChEBI" id="CHEBI:57844"/>
        <dbReference type="ChEBI" id="CHEBI:59789"/>
        <dbReference type="ChEBI" id="CHEBI:82833"/>
        <dbReference type="ChEBI" id="CHEBI:194443"/>
        <dbReference type="EC" id="2.4.99.17"/>
    </reaction>
</comment>
<comment type="pathway">
    <text evidence="1">tRNA modification; tRNA-queuosine biosynthesis.</text>
</comment>
<comment type="subunit">
    <text evidence="1">Monomer.</text>
</comment>
<comment type="subcellular location">
    <subcellularLocation>
        <location evidence="1">Cytoplasm</location>
    </subcellularLocation>
</comment>
<comment type="similarity">
    <text evidence="1">Belongs to the QueA family.</text>
</comment>
<accession>Q07MX7</accession>
<dbReference type="EC" id="2.4.99.17" evidence="1"/>
<dbReference type="EMBL" id="CP000463">
    <property type="protein sequence ID" value="ABJ06707.1"/>
    <property type="molecule type" value="Genomic_DNA"/>
</dbReference>
<dbReference type="SMR" id="Q07MX7"/>
<dbReference type="STRING" id="316055.RPE_2770"/>
<dbReference type="KEGG" id="rpe:RPE_2770"/>
<dbReference type="eggNOG" id="COG0809">
    <property type="taxonomic scope" value="Bacteria"/>
</dbReference>
<dbReference type="HOGENOM" id="CLU_039110_1_1_5"/>
<dbReference type="OrthoDB" id="9805933at2"/>
<dbReference type="UniPathway" id="UPA00392"/>
<dbReference type="GO" id="GO:0005737">
    <property type="term" value="C:cytoplasm"/>
    <property type="evidence" value="ECO:0007669"/>
    <property type="project" value="UniProtKB-SubCell"/>
</dbReference>
<dbReference type="GO" id="GO:0051075">
    <property type="term" value="F:S-adenosylmethionine:tRNA ribosyltransferase-isomerase activity"/>
    <property type="evidence" value="ECO:0007669"/>
    <property type="project" value="UniProtKB-EC"/>
</dbReference>
<dbReference type="GO" id="GO:0008616">
    <property type="term" value="P:queuosine biosynthetic process"/>
    <property type="evidence" value="ECO:0007669"/>
    <property type="project" value="UniProtKB-UniRule"/>
</dbReference>
<dbReference type="GO" id="GO:0002099">
    <property type="term" value="P:tRNA wobble guanine modification"/>
    <property type="evidence" value="ECO:0007669"/>
    <property type="project" value="TreeGrafter"/>
</dbReference>
<dbReference type="FunFam" id="3.40.1780.10:FF:000001">
    <property type="entry name" value="S-adenosylmethionine:tRNA ribosyltransferase-isomerase"/>
    <property type="match status" value="1"/>
</dbReference>
<dbReference type="Gene3D" id="2.40.10.240">
    <property type="entry name" value="QueA-like"/>
    <property type="match status" value="1"/>
</dbReference>
<dbReference type="Gene3D" id="3.40.1780.10">
    <property type="entry name" value="QueA-like"/>
    <property type="match status" value="1"/>
</dbReference>
<dbReference type="HAMAP" id="MF_00113">
    <property type="entry name" value="QueA"/>
    <property type="match status" value="1"/>
</dbReference>
<dbReference type="InterPro" id="IPR003699">
    <property type="entry name" value="QueA"/>
</dbReference>
<dbReference type="InterPro" id="IPR042118">
    <property type="entry name" value="QueA_dom1"/>
</dbReference>
<dbReference type="InterPro" id="IPR042119">
    <property type="entry name" value="QueA_dom2"/>
</dbReference>
<dbReference type="InterPro" id="IPR036100">
    <property type="entry name" value="QueA_sf"/>
</dbReference>
<dbReference type="NCBIfam" id="NF001140">
    <property type="entry name" value="PRK00147.1"/>
    <property type="match status" value="1"/>
</dbReference>
<dbReference type="NCBIfam" id="TIGR00113">
    <property type="entry name" value="queA"/>
    <property type="match status" value="1"/>
</dbReference>
<dbReference type="PANTHER" id="PTHR30307">
    <property type="entry name" value="S-ADENOSYLMETHIONINE:TRNA RIBOSYLTRANSFERASE-ISOMERASE"/>
    <property type="match status" value="1"/>
</dbReference>
<dbReference type="PANTHER" id="PTHR30307:SF0">
    <property type="entry name" value="S-ADENOSYLMETHIONINE:TRNA RIBOSYLTRANSFERASE-ISOMERASE"/>
    <property type="match status" value="1"/>
</dbReference>
<dbReference type="Pfam" id="PF02547">
    <property type="entry name" value="Queuosine_synth"/>
    <property type="match status" value="1"/>
</dbReference>
<dbReference type="SUPFAM" id="SSF111337">
    <property type="entry name" value="QueA-like"/>
    <property type="match status" value="1"/>
</dbReference>
<sequence>MRTDLFDFDLPQGAIALRPASPRDAARMLVVEASGALHDRVVSELPEWLRPGDALVVNDTKVIAAQLTGRRIGRDTEPKIDATLIKRLDGSRWQALVKPAKKLLPGDIVRFGHDGRVCLLGQLDATVEAKGEAGEIILAFTLHGPVLDQAIAELGAPPLPPYIASKRAPDDRDAADYQTMFAANEGAVAAPTAGLHFTKALEQALAARGVTLHRVTLHVGAGTFLPVKTEDTAEHKMHAEWGCLSRETADALNAARAADGRIVAVGTTSLRLLESAAGDDGRLAPFADDTAIFITPGYRFKAVDVLMTNFHLPRSTLFMLVSAFAGLDTMQRAYAHAIKSGYRFYSYGDACLLFRNPS</sequence>
<feature type="chain" id="PRO_1000015256" description="S-adenosylmethionine:tRNA ribosyltransferase-isomerase">
    <location>
        <begin position="1"/>
        <end position="358"/>
    </location>
</feature>
<name>QUEA_RHOP5</name>
<gene>
    <name evidence="1" type="primary">queA</name>
    <name type="ordered locus">RPE_2770</name>
</gene>
<protein>
    <recommendedName>
        <fullName evidence="1">S-adenosylmethionine:tRNA ribosyltransferase-isomerase</fullName>
        <ecNumber evidence="1">2.4.99.17</ecNumber>
    </recommendedName>
    <alternativeName>
        <fullName evidence="1">Queuosine biosynthesis protein QueA</fullName>
    </alternativeName>
</protein>
<reference key="1">
    <citation type="submission" date="2006-09" db="EMBL/GenBank/DDBJ databases">
        <title>Complete sequence of Rhodopseudomonas palustris BisA53.</title>
        <authorList>
            <consortium name="US DOE Joint Genome Institute"/>
            <person name="Copeland A."/>
            <person name="Lucas S."/>
            <person name="Lapidus A."/>
            <person name="Barry K."/>
            <person name="Detter J.C."/>
            <person name="Glavina del Rio T."/>
            <person name="Hammon N."/>
            <person name="Israni S."/>
            <person name="Dalin E."/>
            <person name="Tice H."/>
            <person name="Pitluck S."/>
            <person name="Chain P."/>
            <person name="Malfatti S."/>
            <person name="Shin M."/>
            <person name="Vergez L."/>
            <person name="Schmutz J."/>
            <person name="Larimer F."/>
            <person name="Land M."/>
            <person name="Hauser L."/>
            <person name="Pelletier D.A."/>
            <person name="Kyrpides N."/>
            <person name="Kim E."/>
            <person name="Harwood C.S."/>
            <person name="Oda Y."/>
            <person name="Richardson P."/>
        </authorList>
    </citation>
    <scope>NUCLEOTIDE SEQUENCE [LARGE SCALE GENOMIC DNA]</scope>
    <source>
        <strain>BisA53</strain>
    </source>
</reference>
<keyword id="KW-0963">Cytoplasm</keyword>
<keyword id="KW-0671">Queuosine biosynthesis</keyword>
<keyword id="KW-0949">S-adenosyl-L-methionine</keyword>
<keyword id="KW-0808">Transferase</keyword>
<organism>
    <name type="scientific">Rhodopseudomonas palustris (strain BisA53)</name>
    <dbReference type="NCBI Taxonomy" id="316055"/>
    <lineage>
        <taxon>Bacteria</taxon>
        <taxon>Pseudomonadati</taxon>
        <taxon>Pseudomonadota</taxon>
        <taxon>Alphaproteobacteria</taxon>
        <taxon>Hyphomicrobiales</taxon>
        <taxon>Nitrobacteraceae</taxon>
        <taxon>Rhodopseudomonas</taxon>
    </lineage>
</organism>
<evidence type="ECO:0000255" key="1">
    <source>
        <dbReference type="HAMAP-Rule" id="MF_00113"/>
    </source>
</evidence>
<proteinExistence type="inferred from homology"/>